<dbReference type="EC" id="2.8.4.4" evidence="1"/>
<dbReference type="EMBL" id="CP000542">
    <property type="protein sequence ID" value="ABM58962.1"/>
    <property type="molecule type" value="Genomic_DNA"/>
</dbReference>
<dbReference type="RefSeq" id="WP_011810954.1">
    <property type="nucleotide sequence ID" value="NC_008786.1"/>
</dbReference>
<dbReference type="SMR" id="A1WMV5"/>
<dbReference type="STRING" id="391735.Veis_3232"/>
<dbReference type="GeneID" id="76461682"/>
<dbReference type="KEGG" id="vei:Veis_3232"/>
<dbReference type="eggNOG" id="COG0621">
    <property type="taxonomic scope" value="Bacteria"/>
</dbReference>
<dbReference type="HOGENOM" id="CLU_018697_0_0_4"/>
<dbReference type="OrthoDB" id="9805215at2"/>
<dbReference type="Proteomes" id="UP000000374">
    <property type="component" value="Chromosome"/>
</dbReference>
<dbReference type="GO" id="GO:0005829">
    <property type="term" value="C:cytosol"/>
    <property type="evidence" value="ECO:0007669"/>
    <property type="project" value="TreeGrafter"/>
</dbReference>
<dbReference type="GO" id="GO:0051539">
    <property type="term" value="F:4 iron, 4 sulfur cluster binding"/>
    <property type="evidence" value="ECO:0007669"/>
    <property type="project" value="UniProtKB-UniRule"/>
</dbReference>
<dbReference type="GO" id="GO:0035599">
    <property type="term" value="F:aspartic acid methylthiotransferase activity"/>
    <property type="evidence" value="ECO:0007669"/>
    <property type="project" value="TreeGrafter"/>
</dbReference>
<dbReference type="GO" id="GO:0046872">
    <property type="term" value="F:metal ion binding"/>
    <property type="evidence" value="ECO:0007669"/>
    <property type="project" value="UniProtKB-KW"/>
</dbReference>
<dbReference type="GO" id="GO:0103039">
    <property type="term" value="F:protein methylthiotransferase activity"/>
    <property type="evidence" value="ECO:0007669"/>
    <property type="project" value="UniProtKB-EC"/>
</dbReference>
<dbReference type="GO" id="GO:0006400">
    <property type="term" value="P:tRNA modification"/>
    <property type="evidence" value="ECO:0007669"/>
    <property type="project" value="InterPro"/>
</dbReference>
<dbReference type="CDD" id="cd01335">
    <property type="entry name" value="Radical_SAM"/>
    <property type="match status" value="1"/>
</dbReference>
<dbReference type="FunFam" id="3.40.50.12160:FF:000002">
    <property type="entry name" value="Ribosomal protein S12 methylthiotransferase RimO"/>
    <property type="match status" value="1"/>
</dbReference>
<dbReference type="FunFam" id="3.80.30.20:FF:000001">
    <property type="entry name" value="tRNA-2-methylthio-N(6)-dimethylallyladenosine synthase 2"/>
    <property type="match status" value="1"/>
</dbReference>
<dbReference type="Gene3D" id="3.40.50.12160">
    <property type="entry name" value="Methylthiotransferase, N-terminal domain"/>
    <property type="match status" value="1"/>
</dbReference>
<dbReference type="Gene3D" id="2.40.50.140">
    <property type="entry name" value="Nucleic acid-binding proteins"/>
    <property type="match status" value="1"/>
</dbReference>
<dbReference type="Gene3D" id="3.80.30.20">
    <property type="entry name" value="tm_1862 like domain"/>
    <property type="match status" value="1"/>
</dbReference>
<dbReference type="HAMAP" id="MF_01865">
    <property type="entry name" value="MTTase_RimO"/>
    <property type="match status" value="1"/>
</dbReference>
<dbReference type="InterPro" id="IPR006638">
    <property type="entry name" value="Elp3/MiaA/NifB-like_rSAM"/>
</dbReference>
<dbReference type="InterPro" id="IPR005839">
    <property type="entry name" value="Methylthiotransferase"/>
</dbReference>
<dbReference type="InterPro" id="IPR020612">
    <property type="entry name" value="Methylthiotransferase_CS"/>
</dbReference>
<dbReference type="InterPro" id="IPR013848">
    <property type="entry name" value="Methylthiotransferase_N"/>
</dbReference>
<dbReference type="InterPro" id="IPR038135">
    <property type="entry name" value="Methylthiotransferase_N_sf"/>
</dbReference>
<dbReference type="InterPro" id="IPR012340">
    <property type="entry name" value="NA-bd_OB-fold"/>
</dbReference>
<dbReference type="InterPro" id="IPR005840">
    <property type="entry name" value="Ribosomal_uS12_MeSTrfase_RimO"/>
</dbReference>
<dbReference type="InterPro" id="IPR007197">
    <property type="entry name" value="rSAM"/>
</dbReference>
<dbReference type="InterPro" id="IPR023404">
    <property type="entry name" value="rSAM_horseshoe"/>
</dbReference>
<dbReference type="InterPro" id="IPR002792">
    <property type="entry name" value="TRAM_dom"/>
</dbReference>
<dbReference type="NCBIfam" id="TIGR01125">
    <property type="entry name" value="30S ribosomal protein S12 methylthiotransferase RimO"/>
    <property type="match status" value="1"/>
</dbReference>
<dbReference type="NCBIfam" id="TIGR00089">
    <property type="entry name" value="MiaB/RimO family radical SAM methylthiotransferase"/>
    <property type="match status" value="1"/>
</dbReference>
<dbReference type="PANTHER" id="PTHR43837">
    <property type="entry name" value="RIBOSOMAL PROTEIN S12 METHYLTHIOTRANSFERASE RIMO"/>
    <property type="match status" value="1"/>
</dbReference>
<dbReference type="PANTHER" id="PTHR43837:SF1">
    <property type="entry name" value="RIBOSOMAL PROTEIN US12 METHYLTHIOTRANSFERASE RIMO"/>
    <property type="match status" value="1"/>
</dbReference>
<dbReference type="Pfam" id="PF04055">
    <property type="entry name" value="Radical_SAM"/>
    <property type="match status" value="1"/>
</dbReference>
<dbReference type="Pfam" id="PF18693">
    <property type="entry name" value="TRAM_2"/>
    <property type="match status" value="1"/>
</dbReference>
<dbReference type="Pfam" id="PF00919">
    <property type="entry name" value="UPF0004"/>
    <property type="match status" value="1"/>
</dbReference>
<dbReference type="SFLD" id="SFLDG01082">
    <property type="entry name" value="B12-binding_domain_containing"/>
    <property type="match status" value="1"/>
</dbReference>
<dbReference type="SFLD" id="SFLDS00029">
    <property type="entry name" value="Radical_SAM"/>
    <property type="match status" value="1"/>
</dbReference>
<dbReference type="SFLD" id="SFLDF00274">
    <property type="entry name" value="ribosomal_protein_S12_methylth"/>
    <property type="match status" value="1"/>
</dbReference>
<dbReference type="SMART" id="SM00729">
    <property type="entry name" value="Elp3"/>
    <property type="match status" value="1"/>
</dbReference>
<dbReference type="SUPFAM" id="SSF102114">
    <property type="entry name" value="Radical SAM enzymes"/>
    <property type="match status" value="1"/>
</dbReference>
<dbReference type="PROSITE" id="PS51449">
    <property type="entry name" value="MTTASE_N"/>
    <property type="match status" value="1"/>
</dbReference>
<dbReference type="PROSITE" id="PS01278">
    <property type="entry name" value="MTTASE_RADICAL"/>
    <property type="match status" value="1"/>
</dbReference>
<dbReference type="PROSITE" id="PS51918">
    <property type="entry name" value="RADICAL_SAM"/>
    <property type="match status" value="1"/>
</dbReference>
<dbReference type="PROSITE" id="PS50926">
    <property type="entry name" value="TRAM"/>
    <property type="match status" value="1"/>
</dbReference>
<reference key="1">
    <citation type="submission" date="2006-12" db="EMBL/GenBank/DDBJ databases">
        <title>Complete sequence of chromosome 1 of Verminephrobacter eiseniae EF01-2.</title>
        <authorList>
            <person name="Copeland A."/>
            <person name="Lucas S."/>
            <person name="Lapidus A."/>
            <person name="Barry K."/>
            <person name="Detter J.C."/>
            <person name="Glavina del Rio T."/>
            <person name="Dalin E."/>
            <person name="Tice H."/>
            <person name="Pitluck S."/>
            <person name="Chertkov O."/>
            <person name="Brettin T."/>
            <person name="Bruce D."/>
            <person name="Han C."/>
            <person name="Tapia R."/>
            <person name="Gilna P."/>
            <person name="Schmutz J."/>
            <person name="Larimer F."/>
            <person name="Land M."/>
            <person name="Hauser L."/>
            <person name="Kyrpides N."/>
            <person name="Kim E."/>
            <person name="Stahl D."/>
            <person name="Richardson P."/>
        </authorList>
    </citation>
    <scope>NUCLEOTIDE SEQUENCE [LARGE SCALE GENOMIC DNA]</scope>
    <source>
        <strain>EF01-2</strain>
    </source>
</reference>
<organism>
    <name type="scientific">Verminephrobacter eiseniae (strain EF01-2)</name>
    <dbReference type="NCBI Taxonomy" id="391735"/>
    <lineage>
        <taxon>Bacteria</taxon>
        <taxon>Pseudomonadati</taxon>
        <taxon>Pseudomonadota</taxon>
        <taxon>Betaproteobacteria</taxon>
        <taxon>Burkholderiales</taxon>
        <taxon>Comamonadaceae</taxon>
        <taxon>Verminephrobacter</taxon>
    </lineage>
</organism>
<sequence length="462" mass="50124">MTTMTAERAPRIGMVSLGCPKALTDSELILTQLSAEGYETSKTFQGADLVIVNTCGFIDDAVKESLDTIGEALAENGKVIVTGCLGARTGADGGNMVRQLHPSVLAVTGPQATQQVLDAVHRNLPKPHDPFIDLVPGGMGIAGLKLTPRHYAYLKISEGCNHRCTFCIIPTLRGALVSRPIGAVLNEARALFAGGVKELLVISQDSSAYGVDMQYRTGFWDGQPLKTRLLELVQALGALAEPYGAWVRLHYVYPYPSVDALIPLMAQGRVLPYLDVPLQHSHPEVLRRMKRPASGERNLERIQRWREVCPEIVIRSSFIVGFPGETQAEFEHLLDFLRAARIDRVGCFAYSDVSGAVANDLPGMLPMPLRQERRARFMAVAEALSSAKLQRRVGATMQVLIDAAPGLGRKGGVGRSYADAPEIDGAVHLLPPEKISKTLKVGEFTQARIVGVRGHDLLAQPI</sequence>
<keyword id="KW-0004">4Fe-4S</keyword>
<keyword id="KW-0963">Cytoplasm</keyword>
<keyword id="KW-0408">Iron</keyword>
<keyword id="KW-0411">Iron-sulfur</keyword>
<keyword id="KW-0479">Metal-binding</keyword>
<keyword id="KW-1185">Reference proteome</keyword>
<keyword id="KW-0949">S-adenosyl-L-methionine</keyword>
<keyword id="KW-0808">Transferase</keyword>
<proteinExistence type="inferred from homology"/>
<evidence type="ECO:0000255" key="1">
    <source>
        <dbReference type="HAMAP-Rule" id="MF_01865"/>
    </source>
</evidence>
<evidence type="ECO:0000255" key="2">
    <source>
        <dbReference type="PROSITE-ProRule" id="PRU01266"/>
    </source>
</evidence>
<gene>
    <name evidence="1" type="primary">rimO</name>
    <name type="ordered locus">Veis_3232</name>
</gene>
<name>RIMO_VEREI</name>
<accession>A1WMV5</accession>
<feature type="chain" id="PRO_0000375062" description="Ribosomal protein uS12 methylthiotransferase RimO">
    <location>
        <begin position="1"/>
        <end position="462"/>
    </location>
</feature>
<feature type="domain" description="MTTase N-terminal" evidence="1">
    <location>
        <begin position="10"/>
        <end position="125"/>
    </location>
</feature>
<feature type="domain" description="Radical SAM core" evidence="2">
    <location>
        <begin position="146"/>
        <end position="388"/>
    </location>
</feature>
<feature type="domain" description="TRAM" evidence="1">
    <location>
        <begin position="390"/>
        <end position="462"/>
    </location>
</feature>
<feature type="binding site" evidence="1">
    <location>
        <position position="19"/>
    </location>
    <ligand>
        <name>[4Fe-4S] cluster</name>
        <dbReference type="ChEBI" id="CHEBI:49883"/>
        <label>1</label>
    </ligand>
</feature>
<feature type="binding site" evidence="1">
    <location>
        <position position="55"/>
    </location>
    <ligand>
        <name>[4Fe-4S] cluster</name>
        <dbReference type="ChEBI" id="CHEBI:49883"/>
        <label>1</label>
    </ligand>
</feature>
<feature type="binding site" evidence="1">
    <location>
        <position position="84"/>
    </location>
    <ligand>
        <name>[4Fe-4S] cluster</name>
        <dbReference type="ChEBI" id="CHEBI:49883"/>
        <label>1</label>
    </ligand>
</feature>
<feature type="binding site" evidence="1">
    <location>
        <position position="160"/>
    </location>
    <ligand>
        <name>[4Fe-4S] cluster</name>
        <dbReference type="ChEBI" id="CHEBI:49883"/>
        <label>2</label>
        <note>4Fe-4S-S-AdoMet</note>
    </ligand>
</feature>
<feature type="binding site" evidence="1">
    <location>
        <position position="164"/>
    </location>
    <ligand>
        <name>[4Fe-4S] cluster</name>
        <dbReference type="ChEBI" id="CHEBI:49883"/>
        <label>2</label>
        <note>4Fe-4S-S-AdoMet</note>
    </ligand>
</feature>
<feature type="binding site" evidence="1">
    <location>
        <position position="167"/>
    </location>
    <ligand>
        <name>[4Fe-4S] cluster</name>
        <dbReference type="ChEBI" id="CHEBI:49883"/>
        <label>2</label>
        <note>4Fe-4S-S-AdoMet</note>
    </ligand>
</feature>
<protein>
    <recommendedName>
        <fullName evidence="1">Ribosomal protein uS12 methylthiotransferase RimO</fullName>
        <shortName evidence="1">uS12 MTTase</shortName>
        <shortName evidence="1">uS12 methylthiotransferase</shortName>
        <ecNumber evidence="1">2.8.4.4</ecNumber>
    </recommendedName>
    <alternativeName>
        <fullName evidence="1">Ribosomal protein uS12 (aspartate-C(3))-methylthiotransferase</fullName>
    </alternativeName>
    <alternativeName>
        <fullName evidence="1">Ribosome maturation factor RimO</fullName>
    </alternativeName>
</protein>
<comment type="function">
    <text evidence="1">Catalyzes the methylthiolation of an aspartic acid residue of ribosomal protein uS12.</text>
</comment>
<comment type="catalytic activity">
    <reaction evidence="1">
        <text>L-aspartate(89)-[ribosomal protein uS12]-hydrogen + (sulfur carrier)-SH + AH2 + 2 S-adenosyl-L-methionine = 3-methylsulfanyl-L-aspartate(89)-[ribosomal protein uS12]-hydrogen + (sulfur carrier)-H + 5'-deoxyadenosine + L-methionine + A + S-adenosyl-L-homocysteine + 2 H(+)</text>
        <dbReference type="Rhea" id="RHEA:37087"/>
        <dbReference type="Rhea" id="RHEA-COMP:10460"/>
        <dbReference type="Rhea" id="RHEA-COMP:10461"/>
        <dbReference type="Rhea" id="RHEA-COMP:14737"/>
        <dbReference type="Rhea" id="RHEA-COMP:14739"/>
        <dbReference type="ChEBI" id="CHEBI:13193"/>
        <dbReference type="ChEBI" id="CHEBI:15378"/>
        <dbReference type="ChEBI" id="CHEBI:17319"/>
        <dbReference type="ChEBI" id="CHEBI:17499"/>
        <dbReference type="ChEBI" id="CHEBI:29917"/>
        <dbReference type="ChEBI" id="CHEBI:29961"/>
        <dbReference type="ChEBI" id="CHEBI:57844"/>
        <dbReference type="ChEBI" id="CHEBI:57856"/>
        <dbReference type="ChEBI" id="CHEBI:59789"/>
        <dbReference type="ChEBI" id="CHEBI:64428"/>
        <dbReference type="ChEBI" id="CHEBI:73599"/>
        <dbReference type="EC" id="2.8.4.4"/>
    </reaction>
</comment>
<comment type="cofactor">
    <cofactor evidence="1">
        <name>[4Fe-4S] cluster</name>
        <dbReference type="ChEBI" id="CHEBI:49883"/>
    </cofactor>
    <text evidence="1">Binds 2 [4Fe-4S] clusters. One cluster is coordinated with 3 cysteines and an exchangeable S-adenosyl-L-methionine.</text>
</comment>
<comment type="subcellular location">
    <subcellularLocation>
        <location evidence="1">Cytoplasm</location>
    </subcellularLocation>
</comment>
<comment type="similarity">
    <text evidence="1">Belongs to the methylthiotransferase family. RimO subfamily.</text>
</comment>